<name>Y56_SIRV1</name>
<keyword id="KW-0002">3D-structure</keyword>
<keyword id="KW-1185">Reference proteome</keyword>
<evidence type="ECO:0007829" key="1">
    <source>
        <dbReference type="PDB" id="2X48"/>
    </source>
</evidence>
<organism>
    <name type="scientific">Sulfolobus islandicus rod-shaped virus 1</name>
    <name type="common">SIRV-1</name>
    <name type="synonym">Sulfolobus virus SIRV-1</name>
    <dbReference type="NCBI Taxonomy" id="157898"/>
    <lineage>
        <taxon>Viruses</taxon>
        <taxon>Adnaviria</taxon>
        <taxon>Zilligvirae</taxon>
        <taxon>Taleaviricota</taxon>
        <taxon>Tokiviricetes</taxon>
        <taxon>Ligamenvirales</taxon>
        <taxon>Rudiviridae</taxon>
        <taxon>Icerudivirus</taxon>
        <taxon>Icerudivirus SIRV1</taxon>
    </lineage>
</organism>
<dbReference type="EMBL" id="AJ414696">
    <property type="protein sequence ID" value="CAC93956.1"/>
    <property type="molecule type" value="Genomic_DNA"/>
</dbReference>
<dbReference type="EMBL" id="AJ414696">
    <property type="protein sequence ID" value="CAC94000.1"/>
    <property type="molecule type" value="Genomic_DNA"/>
</dbReference>
<dbReference type="EMBL" id="AJ703803">
    <property type="protein sequence ID" value="CAG28277.1"/>
    <property type="molecule type" value="Genomic_DNA"/>
</dbReference>
<dbReference type="EMBL" id="AJ748296">
    <property type="protein sequence ID" value="CAG38821.1"/>
    <property type="molecule type" value="Genomic_DNA"/>
</dbReference>
<dbReference type="RefSeq" id="NP_666589.1">
    <property type="nucleotide sequence ID" value="NC_004087.1"/>
</dbReference>
<dbReference type="RefSeq" id="NP_666633.1">
    <property type="nucleotide sequence ID" value="NC_004087.1"/>
</dbReference>
<dbReference type="PDB" id="2X48">
    <property type="method" value="X-ray"/>
    <property type="resolution" value="2.60 A"/>
    <property type="chains" value="A/B/C=1-55"/>
</dbReference>
<dbReference type="PDBsum" id="2X48"/>
<dbReference type="SMR" id="Q8QHM9"/>
<dbReference type="KEGG" id="vg:951387"/>
<dbReference type="KEGG" id="vg:951391"/>
<dbReference type="OrthoDB" id="27394at10239"/>
<dbReference type="EvolutionaryTrace" id="Q8QHM9"/>
<dbReference type="Proteomes" id="UP000002270">
    <property type="component" value="Genome"/>
</dbReference>
<dbReference type="Proteomes" id="UP000223181">
    <property type="component" value="Segment"/>
</dbReference>
<dbReference type="Gene3D" id="1.10.10.60">
    <property type="entry name" value="Homeodomain-like"/>
    <property type="match status" value="1"/>
</dbReference>
<sequence>MKKEIQVQGVRYYVESEDDLVSVAHELAKMGYTVQQIANALGVSERKVRRYLESC</sequence>
<gene>
    <name type="ORF">56a</name>
</gene>
<gene>
    <name type="ORF">56c</name>
</gene>
<accession>Q8QHM9</accession>
<accession>Q5TJB7</accession>
<proteinExistence type="evidence at protein level"/>
<organismHost>
    <name type="scientific">Saccharolobus islandicus</name>
    <name type="common">Sulfolobus islandicus</name>
    <dbReference type="NCBI Taxonomy" id="43080"/>
</organismHost>
<reference key="1">
    <citation type="journal article" date="2001" name="Virology">
        <title>Sequences and replication of genomes of the archaeal rudiviruses SIRV1 and SIRV2: relationships to the archaeal lipothrixvirus SIFV and some eukaryal viruses.</title>
        <authorList>
            <person name="Peng X."/>
            <person name="Blum H."/>
            <person name="She Q."/>
            <person name="Mallok S."/>
            <person name="Bruegger K."/>
            <person name="Garrett R.A."/>
            <person name="Zillig W."/>
            <person name="Prangishvili D."/>
        </authorList>
    </citation>
    <scope>NUCLEOTIDE SEQUENCE [LARGE SCALE GENOMIC DNA]</scope>
    <source>
        <strain>Isolate variant VIII</strain>
    </source>
</reference>
<reference key="2">
    <citation type="journal article" date="2004" name="Mol. Microbiol.">
        <title>Multiple variants of the archaeal DNA rudivirus SIRV1 in a single host and a novel mechanism of genomic variation.</title>
        <authorList>
            <person name="Peng X."/>
            <person name="Kessler A."/>
            <person name="Phan H."/>
            <person name="Garrett R.A."/>
            <person name="Prangishvili D."/>
        </authorList>
    </citation>
    <scope>NUCLEOTIDE SEQUENCE [LARGE SCALE GENOMIC DNA]</scope>
    <source>
        <strain>Isolate variant II</strain>
        <strain>Isolate variant XX</strain>
    </source>
</reference>
<protein>
    <recommendedName>
        <fullName>Uncharacterized protein 56</fullName>
    </recommendedName>
</protein>
<feature type="chain" id="PRO_0000342291" description="Uncharacterized protein 56">
    <location>
        <begin position="1"/>
        <end position="55"/>
    </location>
</feature>
<feature type="strand" evidence="1">
    <location>
        <begin position="3"/>
        <end position="7"/>
    </location>
</feature>
<feature type="strand" evidence="1">
    <location>
        <begin position="10"/>
        <end position="14"/>
    </location>
</feature>
<feature type="helix" evidence="1">
    <location>
        <begin position="17"/>
        <end position="29"/>
    </location>
</feature>
<feature type="helix" evidence="1">
    <location>
        <begin position="34"/>
        <end position="41"/>
    </location>
</feature>
<feature type="helix" evidence="1">
    <location>
        <begin position="45"/>
        <end position="52"/>
    </location>
</feature>